<keyword id="KW-0030">Aminoacyl-tRNA synthetase</keyword>
<keyword id="KW-0067">ATP-binding</keyword>
<keyword id="KW-0963">Cytoplasm</keyword>
<keyword id="KW-0436">Ligase</keyword>
<keyword id="KW-0479">Metal-binding</keyword>
<keyword id="KW-0547">Nucleotide-binding</keyword>
<keyword id="KW-0648">Protein biosynthesis</keyword>
<keyword id="KW-1185">Reference proteome</keyword>
<keyword id="KW-0862">Zinc</keyword>
<sequence>MGRTPELKLYNTLTREKSAFKPIDAENVRMYVCGPTVYDFAHIGNARPVIVFDVLFRLLRHVYGEDHVTYARNITDVDDKINARALRDHPGLPLNEAIRAVTEKTETQFHADVAELGCLEPSVEPRATDNIAEMIQIIEKLIGNGHAYVAAGEVLFDTKSMADYGELSKRPLDEQQAGARVAVDAHKKNPGDFVLWKLSSHNEPGWESPWGRGRPGWHIECSAMSRRYLGDIFDIHGGGLDLIFPHHENEIAQSRCAHGTEVMANVWMHNGFVQVEGRKMSKSEGNFVTIHDLLHTETFGGRKWPGEVLRLAMLMTHYREPIDFSIKRLEEAERLLAKWPTAEAGDAAPDESVLNALADDLNTVAAVQALHALAQPGNDAVFAASAVLLGVLPKKVEIDEAFAAAVDALVAMRLEVLKAKNFVEADRIRDELGAKGIQLKDGKDPETGERVTTWEVKR</sequence>
<reference key="1">
    <citation type="journal article" date="2006" name="Proc. Natl. Acad. Sci. U.S.A.">
        <title>The partitioned Rhizobium etli genome: genetic and metabolic redundancy in seven interacting replicons.</title>
        <authorList>
            <person name="Gonzalez V."/>
            <person name="Santamaria R.I."/>
            <person name="Bustos P."/>
            <person name="Hernandez-Gonzalez I."/>
            <person name="Medrano-Soto A."/>
            <person name="Moreno-Hagelsieb G."/>
            <person name="Janga S.C."/>
            <person name="Ramirez M.A."/>
            <person name="Jimenez-Jacinto V."/>
            <person name="Collado-Vides J."/>
            <person name="Davila G."/>
        </authorList>
    </citation>
    <scope>NUCLEOTIDE SEQUENCE [LARGE SCALE GENOMIC DNA]</scope>
    <source>
        <strain>ATCC 51251 / DSM 11541 / JCM 21823 / NBRC 15573 / CFN 42</strain>
    </source>
</reference>
<evidence type="ECO:0000255" key="1">
    <source>
        <dbReference type="HAMAP-Rule" id="MF_00041"/>
    </source>
</evidence>
<gene>
    <name evidence="1" type="primary">cysS</name>
    <name type="ordered locus">RHE_CH01425</name>
</gene>
<dbReference type="EC" id="6.1.1.16" evidence="1"/>
<dbReference type="EMBL" id="CP000133">
    <property type="protein sequence ID" value="ABC90228.1"/>
    <property type="molecule type" value="Genomic_DNA"/>
</dbReference>
<dbReference type="RefSeq" id="WP_011424760.1">
    <property type="nucleotide sequence ID" value="NC_007761.1"/>
</dbReference>
<dbReference type="SMR" id="Q2KAA8"/>
<dbReference type="KEGG" id="ret:RHE_CH01425"/>
<dbReference type="eggNOG" id="COG0215">
    <property type="taxonomic scope" value="Bacteria"/>
</dbReference>
<dbReference type="HOGENOM" id="CLU_013528_0_1_5"/>
<dbReference type="OrthoDB" id="9815130at2"/>
<dbReference type="Proteomes" id="UP000001936">
    <property type="component" value="Chromosome"/>
</dbReference>
<dbReference type="GO" id="GO:0005829">
    <property type="term" value="C:cytosol"/>
    <property type="evidence" value="ECO:0007669"/>
    <property type="project" value="TreeGrafter"/>
</dbReference>
<dbReference type="GO" id="GO:0005524">
    <property type="term" value="F:ATP binding"/>
    <property type="evidence" value="ECO:0007669"/>
    <property type="project" value="UniProtKB-UniRule"/>
</dbReference>
<dbReference type="GO" id="GO:0004817">
    <property type="term" value="F:cysteine-tRNA ligase activity"/>
    <property type="evidence" value="ECO:0007669"/>
    <property type="project" value="UniProtKB-UniRule"/>
</dbReference>
<dbReference type="GO" id="GO:0008270">
    <property type="term" value="F:zinc ion binding"/>
    <property type="evidence" value="ECO:0007669"/>
    <property type="project" value="UniProtKB-UniRule"/>
</dbReference>
<dbReference type="GO" id="GO:0006423">
    <property type="term" value="P:cysteinyl-tRNA aminoacylation"/>
    <property type="evidence" value="ECO:0007669"/>
    <property type="project" value="UniProtKB-UniRule"/>
</dbReference>
<dbReference type="CDD" id="cd00672">
    <property type="entry name" value="CysRS_core"/>
    <property type="match status" value="1"/>
</dbReference>
<dbReference type="FunFam" id="3.40.50.620:FF:000068">
    <property type="entry name" value="Cysteine--tRNA ligase"/>
    <property type="match status" value="1"/>
</dbReference>
<dbReference type="Gene3D" id="3.40.50.620">
    <property type="entry name" value="HUPs"/>
    <property type="match status" value="1"/>
</dbReference>
<dbReference type="HAMAP" id="MF_00041">
    <property type="entry name" value="Cys_tRNA_synth"/>
    <property type="match status" value="1"/>
</dbReference>
<dbReference type="InterPro" id="IPR015803">
    <property type="entry name" value="Cys-tRNA-ligase"/>
</dbReference>
<dbReference type="InterPro" id="IPR024909">
    <property type="entry name" value="Cys-tRNA/MSH_ligase"/>
</dbReference>
<dbReference type="InterPro" id="IPR056411">
    <property type="entry name" value="CysS_C"/>
</dbReference>
<dbReference type="InterPro" id="IPR014729">
    <property type="entry name" value="Rossmann-like_a/b/a_fold"/>
</dbReference>
<dbReference type="InterPro" id="IPR032678">
    <property type="entry name" value="tRNA-synt_1_cat_dom"/>
</dbReference>
<dbReference type="InterPro" id="IPR009080">
    <property type="entry name" value="tRNAsynth_Ia_anticodon-bd"/>
</dbReference>
<dbReference type="NCBIfam" id="TIGR00435">
    <property type="entry name" value="cysS"/>
    <property type="match status" value="1"/>
</dbReference>
<dbReference type="PANTHER" id="PTHR10890:SF3">
    <property type="entry name" value="CYSTEINE--TRNA LIGASE, CYTOPLASMIC"/>
    <property type="match status" value="1"/>
</dbReference>
<dbReference type="PANTHER" id="PTHR10890">
    <property type="entry name" value="CYSTEINYL-TRNA SYNTHETASE"/>
    <property type="match status" value="1"/>
</dbReference>
<dbReference type="Pfam" id="PF23493">
    <property type="entry name" value="CysS_C"/>
    <property type="match status" value="1"/>
</dbReference>
<dbReference type="Pfam" id="PF01406">
    <property type="entry name" value="tRNA-synt_1e"/>
    <property type="match status" value="1"/>
</dbReference>
<dbReference type="PRINTS" id="PR00983">
    <property type="entry name" value="TRNASYNTHCYS"/>
</dbReference>
<dbReference type="SUPFAM" id="SSF47323">
    <property type="entry name" value="Anticodon-binding domain of a subclass of class I aminoacyl-tRNA synthetases"/>
    <property type="match status" value="1"/>
</dbReference>
<dbReference type="SUPFAM" id="SSF52374">
    <property type="entry name" value="Nucleotidylyl transferase"/>
    <property type="match status" value="1"/>
</dbReference>
<proteinExistence type="inferred from homology"/>
<comment type="catalytic activity">
    <reaction evidence="1">
        <text>tRNA(Cys) + L-cysteine + ATP = L-cysteinyl-tRNA(Cys) + AMP + diphosphate</text>
        <dbReference type="Rhea" id="RHEA:17773"/>
        <dbReference type="Rhea" id="RHEA-COMP:9661"/>
        <dbReference type="Rhea" id="RHEA-COMP:9679"/>
        <dbReference type="ChEBI" id="CHEBI:30616"/>
        <dbReference type="ChEBI" id="CHEBI:33019"/>
        <dbReference type="ChEBI" id="CHEBI:35235"/>
        <dbReference type="ChEBI" id="CHEBI:78442"/>
        <dbReference type="ChEBI" id="CHEBI:78517"/>
        <dbReference type="ChEBI" id="CHEBI:456215"/>
        <dbReference type="EC" id="6.1.1.16"/>
    </reaction>
</comment>
<comment type="cofactor">
    <cofactor evidence="1">
        <name>Zn(2+)</name>
        <dbReference type="ChEBI" id="CHEBI:29105"/>
    </cofactor>
    <text evidence="1">Binds 1 zinc ion per subunit.</text>
</comment>
<comment type="subunit">
    <text evidence="1">Monomer.</text>
</comment>
<comment type="subcellular location">
    <subcellularLocation>
        <location evidence="1">Cytoplasm</location>
    </subcellularLocation>
</comment>
<comment type="similarity">
    <text evidence="1">Belongs to the class-I aminoacyl-tRNA synthetase family.</text>
</comment>
<name>SYC_RHIEC</name>
<organism>
    <name type="scientific">Rhizobium etli (strain ATCC 51251 / DSM 11541 / JCM 21823 / NBRC 15573 / CFN 42)</name>
    <dbReference type="NCBI Taxonomy" id="347834"/>
    <lineage>
        <taxon>Bacteria</taxon>
        <taxon>Pseudomonadati</taxon>
        <taxon>Pseudomonadota</taxon>
        <taxon>Alphaproteobacteria</taxon>
        <taxon>Hyphomicrobiales</taxon>
        <taxon>Rhizobiaceae</taxon>
        <taxon>Rhizobium/Agrobacterium group</taxon>
        <taxon>Rhizobium</taxon>
    </lineage>
</organism>
<accession>Q2KAA8</accession>
<protein>
    <recommendedName>
        <fullName evidence="1">Cysteine--tRNA ligase</fullName>
        <ecNumber evidence="1">6.1.1.16</ecNumber>
    </recommendedName>
    <alternativeName>
        <fullName evidence="1">Cysteinyl-tRNA synthetase</fullName>
        <shortName evidence="1">CysRS</shortName>
    </alternativeName>
</protein>
<feature type="chain" id="PRO_0000240943" description="Cysteine--tRNA ligase">
    <location>
        <begin position="1"/>
        <end position="458"/>
    </location>
</feature>
<feature type="short sequence motif" description="'HIGH' region">
    <location>
        <begin position="35"/>
        <end position="45"/>
    </location>
</feature>
<feature type="short sequence motif" description="'KMSKS' region">
    <location>
        <begin position="279"/>
        <end position="283"/>
    </location>
</feature>
<feature type="binding site" evidence="1">
    <location>
        <position position="33"/>
    </location>
    <ligand>
        <name>Zn(2+)</name>
        <dbReference type="ChEBI" id="CHEBI:29105"/>
    </ligand>
</feature>
<feature type="binding site" evidence="1">
    <location>
        <position position="221"/>
    </location>
    <ligand>
        <name>Zn(2+)</name>
        <dbReference type="ChEBI" id="CHEBI:29105"/>
    </ligand>
</feature>
<feature type="binding site" evidence="1">
    <location>
        <position position="246"/>
    </location>
    <ligand>
        <name>Zn(2+)</name>
        <dbReference type="ChEBI" id="CHEBI:29105"/>
    </ligand>
</feature>
<feature type="binding site" evidence="1">
    <location>
        <position position="250"/>
    </location>
    <ligand>
        <name>Zn(2+)</name>
        <dbReference type="ChEBI" id="CHEBI:29105"/>
    </ligand>
</feature>
<feature type="binding site" evidence="1">
    <location>
        <position position="282"/>
    </location>
    <ligand>
        <name>ATP</name>
        <dbReference type="ChEBI" id="CHEBI:30616"/>
    </ligand>
</feature>